<accession>B5BD49</accession>
<keyword id="KW-0963">Cytoplasm</keyword>
<keyword id="KW-0328">Glycosyltransferase</keyword>
<keyword id="KW-0660">Purine salvage</keyword>
<keyword id="KW-0808">Transferase</keyword>
<sequence>MTATAQQLEFLKNSIKSIQDYPKPGILFRDVTSLLEDPKAYALSIELLVERYKNAGITKVVGTEARGFLFGAPVALGLGVGFVPVRKPRKLPRETIAETYELEYGTDQLEIHVDAIKPGDNVLVVDDLLATGGTIEATVKLIRRLGGKVTDAAFIINLFDLGGEQRLEKQGITCYSLVPFPGH</sequence>
<proteinExistence type="inferred from homology"/>
<protein>
    <recommendedName>
        <fullName evidence="1">Adenine phosphoribosyltransferase</fullName>
        <shortName evidence="1">APRT</shortName>
        <ecNumber evidence="1">2.4.2.7</ecNumber>
    </recommendedName>
</protein>
<comment type="function">
    <text evidence="1">Catalyzes a salvage reaction resulting in the formation of AMP, that is energically less costly than de novo synthesis.</text>
</comment>
<comment type="catalytic activity">
    <reaction evidence="1">
        <text>AMP + diphosphate = 5-phospho-alpha-D-ribose 1-diphosphate + adenine</text>
        <dbReference type="Rhea" id="RHEA:16609"/>
        <dbReference type="ChEBI" id="CHEBI:16708"/>
        <dbReference type="ChEBI" id="CHEBI:33019"/>
        <dbReference type="ChEBI" id="CHEBI:58017"/>
        <dbReference type="ChEBI" id="CHEBI:456215"/>
        <dbReference type="EC" id="2.4.2.7"/>
    </reaction>
</comment>
<comment type="pathway">
    <text evidence="1">Purine metabolism; AMP biosynthesis via salvage pathway; AMP from adenine: step 1/1.</text>
</comment>
<comment type="subunit">
    <text evidence="1">Homodimer.</text>
</comment>
<comment type="subcellular location">
    <subcellularLocation>
        <location evidence="1">Cytoplasm</location>
    </subcellularLocation>
</comment>
<comment type="similarity">
    <text evidence="1">Belongs to the purine/pyrimidine phosphoribosyltransferase family.</text>
</comment>
<gene>
    <name evidence="1" type="primary">apt</name>
    <name type="ordered locus">SSPA2082</name>
</gene>
<organism>
    <name type="scientific">Salmonella paratyphi A (strain AKU_12601)</name>
    <dbReference type="NCBI Taxonomy" id="554290"/>
    <lineage>
        <taxon>Bacteria</taxon>
        <taxon>Pseudomonadati</taxon>
        <taxon>Pseudomonadota</taxon>
        <taxon>Gammaproteobacteria</taxon>
        <taxon>Enterobacterales</taxon>
        <taxon>Enterobacteriaceae</taxon>
        <taxon>Salmonella</taxon>
    </lineage>
</organism>
<evidence type="ECO:0000255" key="1">
    <source>
        <dbReference type="HAMAP-Rule" id="MF_00004"/>
    </source>
</evidence>
<dbReference type="EC" id="2.4.2.7" evidence="1"/>
<dbReference type="EMBL" id="FM200053">
    <property type="protein sequence ID" value="CAR60292.1"/>
    <property type="molecule type" value="Genomic_DNA"/>
</dbReference>
<dbReference type="RefSeq" id="WP_000127350.1">
    <property type="nucleotide sequence ID" value="NC_011147.1"/>
</dbReference>
<dbReference type="SMR" id="B5BD49"/>
<dbReference type="KEGG" id="sek:SSPA2082"/>
<dbReference type="HOGENOM" id="CLU_063339_3_0_6"/>
<dbReference type="UniPathway" id="UPA00588">
    <property type="reaction ID" value="UER00646"/>
</dbReference>
<dbReference type="Proteomes" id="UP000001869">
    <property type="component" value="Chromosome"/>
</dbReference>
<dbReference type="GO" id="GO:0005829">
    <property type="term" value="C:cytosol"/>
    <property type="evidence" value="ECO:0007669"/>
    <property type="project" value="TreeGrafter"/>
</dbReference>
<dbReference type="GO" id="GO:0003999">
    <property type="term" value="F:adenine phosphoribosyltransferase activity"/>
    <property type="evidence" value="ECO:0007669"/>
    <property type="project" value="UniProtKB-UniRule"/>
</dbReference>
<dbReference type="GO" id="GO:0006168">
    <property type="term" value="P:adenine salvage"/>
    <property type="evidence" value="ECO:0007669"/>
    <property type="project" value="InterPro"/>
</dbReference>
<dbReference type="GO" id="GO:0044209">
    <property type="term" value="P:AMP salvage"/>
    <property type="evidence" value="ECO:0007669"/>
    <property type="project" value="UniProtKB-UniRule"/>
</dbReference>
<dbReference type="GO" id="GO:0006166">
    <property type="term" value="P:purine ribonucleoside salvage"/>
    <property type="evidence" value="ECO:0007669"/>
    <property type="project" value="UniProtKB-KW"/>
</dbReference>
<dbReference type="CDD" id="cd06223">
    <property type="entry name" value="PRTases_typeI"/>
    <property type="match status" value="1"/>
</dbReference>
<dbReference type="FunFam" id="3.40.50.2020:FF:000004">
    <property type="entry name" value="Adenine phosphoribosyltransferase"/>
    <property type="match status" value="1"/>
</dbReference>
<dbReference type="Gene3D" id="3.40.50.2020">
    <property type="match status" value="1"/>
</dbReference>
<dbReference type="HAMAP" id="MF_00004">
    <property type="entry name" value="Aden_phosphoribosyltr"/>
    <property type="match status" value="1"/>
</dbReference>
<dbReference type="InterPro" id="IPR005764">
    <property type="entry name" value="Ade_phspho_trans"/>
</dbReference>
<dbReference type="InterPro" id="IPR050120">
    <property type="entry name" value="Adenine_PRTase"/>
</dbReference>
<dbReference type="InterPro" id="IPR000836">
    <property type="entry name" value="PRibTrfase_dom"/>
</dbReference>
<dbReference type="InterPro" id="IPR029057">
    <property type="entry name" value="PRTase-like"/>
</dbReference>
<dbReference type="NCBIfam" id="TIGR01090">
    <property type="entry name" value="apt"/>
    <property type="match status" value="1"/>
</dbReference>
<dbReference type="NCBIfam" id="NF002632">
    <property type="entry name" value="PRK02304.1-1"/>
    <property type="match status" value="1"/>
</dbReference>
<dbReference type="NCBIfam" id="NF002634">
    <property type="entry name" value="PRK02304.1-3"/>
    <property type="match status" value="1"/>
</dbReference>
<dbReference type="NCBIfam" id="NF002636">
    <property type="entry name" value="PRK02304.1-5"/>
    <property type="match status" value="1"/>
</dbReference>
<dbReference type="PANTHER" id="PTHR11776">
    <property type="entry name" value="ADENINE PHOSPHORIBOSYLTRANSFERASE"/>
    <property type="match status" value="1"/>
</dbReference>
<dbReference type="PANTHER" id="PTHR11776:SF7">
    <property type="entry name" value="PHOSPHORIBOSYLTRANSFERASE DOMAIN-CONTAINING PROTEIN"/>
    <property type="match status" value="1"/>
</dbReference>
<dbReference type="Pfam" id="PF00156">
    <property type="entry name" value="Pribosyltran"/>
    <property type="match status" value="1"/>
</dbReference>
<dbReference type="SUPFAM" id="SSF53271">
    <property type="entry name" value="PRTase-like"/>
    <property type="match status" value="1"/>
</dbReference>
<dbReference type="PROSITE" id="PS00103">
    <property type="entry name" value="PUR_PYR_PR_TRANSFER"/>
    <property type="match status" value="1"/>
</dbReference>
<name>APT_SALPK</name>
<feature type="chain" id="PRO_1000089004" description="Adenine phosphoribosyltransferase">
    <location>
        <begin position="1"/>
        <end position="183"/>
    </location>
</feature>
<reference key="1">
    <citation type="journal article" date="2009" name="BMC Genomics">
        <title>Pseudogene accumulation in the evolutionary histories of Salmonella enterica serovars Paratyphi A and Typhi.</title>
        <authorList>
            <person name="Holt K.E."/>
            <person name="Thomson N.R."/>
            <person name="Wain J."/>
            <person name="Langridge G.C."/>
            <person name="Hasan R."/>
            <person name="Bhutta Z.A."/>
            <person name="Quail M.A."/>
            <person name="Norbertczak H."/>
            <person name="Walker D."/>
            <person name="Simmonds M."/>
            <person name="White B."/>
            <person name="Bason N."/>
            <person name="Mungall K."/>
            <person name="Dougan G."/>
            <person name="Parkhill J."/>
        </authorList>
    </citation>
    <scope>NUCLEOTIDE SEQUENCE [LARGE SCALE GENOMIC DNA]</scope>
    <source>
        <strain>AKU_12601</strain>
    </source>
</reference>